<dbReference type="EC" id="1.1.99.1" evidence="1"/>
<dbReference type="EC" id="1.2.1.8" evidence="1"/>
<dbReference type="EMBL" id="CP000647">
    <property type="protein sequence ID" value="ABR76034.1"/>
    <property type="molecule type" value="Genomic_DNA"/>
</dbReference>
<dbReference type="RefSeq" id="WP_004142489.1">
    <property type="nucleotide sequence ID" value="NC_009648.1"/>
</dbReference>
<dbReference type="SMR" id="A6T613"/>
<dbReference type="STRING" id="272620.KPN_00584"/>
<dbReference type="CAZy" id="AA3">
    <property type="family name" value="Auxiliary Activities 3"/>
</dbReference>
<dbReference type="PaxDb" id="272620-KPN_00584"/>
<dbReference type="EnsemblBacteria" id="ABR76034">
    <property type="protein sequence ID" value="ABR76034"/>
    <property type="gene ID" value="KPN_00584"/>
</dbReference>
<dbReference type="KEGG" id="kpn:KPN_00584"/>
<dbReference type="HOGENOM" id="CLU_002865_7_1_6"/>
<dbReference type="UniPathway" id="UPA00529">
    <property type="reaction ID" value="UER00385"/>
</dbReference>
<dbReference type="Proteomes" id="UP000000265">
    <property type="component" value="Chromosome"/>
</dbReference>
<dbReference type="GO" id="GO:0016020">
    <property type="term" value="C:membrane"/>
    <property type="evidence" value="ECO:0007669"/>
    <property type="project" value="TreeGrafter"/>
</dbReference>
<dbReference type="GO" id="GO:0008802">
    <property type="term" value="F:betaine-aldehyde dehydrogenase (NAD+) activity"/>
    <property type="evidence" value="ECO:0007669"/>
    <property type="project" value="UniProtKB-EC"/>
</dbReference>
<dbReference type="GO" id="GO:0008812">
    <property type="term" value="F:choline dehydrogenase activity"/>
    <property type="evidence" value="ECO:0007669"/>
    <property type="project" value="UniProtKB-UniRule"/>
</dbReference>
<dbReference type="GO" id="GO:0050660">
    <property type="term" value="F:flavin adenine dinucleotide binding"/>
    <property type="evidence" value="ECO:0007669"/>
    <property type="project" value="InterPro"/>
</dbReference>
<dbReference type="GO" id="GO:0019285">
    <property type="term" value="P:glycine betaine biosynthetic process from choline"/>
    <property type="evidence" value="ECO:0007669"/>
    <property type="project" value="UniProtKB-UniRule"/>
</dbReference>
<dbReference type="Gene3D" id="3.50.50.60">
    <property type="entry name" value="FAD/NAD(P)-binding domain"/>
    <property type="match status" value="1"/>
</dbReference>
<dbReference type="Gene3D" id="3.30.560.10">
    <property type="entry name" value="Glucose Oxidase, domain 3"/>
    <property type="match status" value="1"/>
</dbReference>
<dbReference type="HAMAP" id="MF_00750">
    <property type="entry name" value="Choline_dehydrogen"/>
    <property type="match status" value="1"/>
</dbReference>
<dbReference type="InterPro" id="IPR011533">
    <property type="entry name" value="BetA"/>
</dbReference>
<dbReference type="InterPro" id="IPR036188">
    <property type="entry name" value="FAD/NAD-bd_sf"/>
</dbReference>
<dbReference type="InterPro" id="IPR012132">
    <property type="entry name" value="GMC_OxRdtase"/>
</dbReference>
<dbReference type="InterPro" id="IPR000172">
    <property type="entry name" value="GMC_OxRdtase_N"/>
</dbReference>
<dbReference type="InterPro" id="IPR007867">
    <property type="entry name" value="GMC_OxRtase_C"/>
</dbReference>
<dbReference type="NCBIfam" id="TIGR01810">
    <property type="entry name" value="betA"/>
    <property type="match status" value="1"/>
</dbReference>
<dbReference type="NCBIfam" id="NF002550">
    <property type="entry name" value="PRK02106.1"/>
    <property type="match status" value="1"/>
</dbReference>
<dbReference type="PANTHER" id="PTHR11552:SF147">
    <property type="entry name" value="CHOLINE DEHYDROGENASE, MITOCHONDRIAL"/>
    <property type="match status" value="1"/>
</dbReference>
<dbReference type="PANTHER" id="PTHR11552">
    <property type="entry name" value="GLUCOSE-METHANOL-CHOLINE GMC OXIDOREDUCTASE"/>
    <property type="match status" value="1"/>
</dbReference>
<dbReference type="Pfam" id="PF05199">
    <property type="entry name" value="GMC_oxred_C"/>
    <property type="match status" value="1"/>
</dbReference>
<dbReference type="Pfam" id="PF00732">
    <property type="entry name" value="GMC_oxred_N"/>
    <property type="match status" value="1"/>
</dbReference>
<dbReference type="PIRSF" id="PIRSF000137">
    <property type="entry name" value="Alcohol_oxidase"/>
    <property type="match status" value="1"/>
</dbReference>
<dbReference type="SUPFAM" id="SSF54373">
    <property type="entry name" value="FAD-linked reductases, C-terminal domain"/>
    <property type="match status" value="1"/>
</dbReference>
<dbReference type="SUPFAM" id="SSF51905">
    <property type="entry name" value="FAD/NAD(P)-binding domain"/>
    <property type="match status" value="1"/>
</dbReference>
<dbReference type="PROSITE" id="PS00623">
    <property type="entry name" value="GMC_OXRED_1"/>
    <property type="match status" value="1"/>
</dbReference>
<dbReference type="PROSITE" id="PS00624">
    <property type="entry name" value="GMC_OXRED_2"/>
    <property type="match status" value="1"/>
</dbReference>
<gene>
    <name evidence="1" type="primary">betA</name>
    <name type="ordered locus">KPN78578_05730</name>
    <name type="ORF">KPN_00584</name>
</gene>
<comment type="function">
    <text evidence="1">Involved in the biosynthesis of the osmoprotectant glycine betaine. Catalyzes the oxidation of choline to betaine aldehyde and betaine aldehyde to glycine betaine at the same rate.</text>
</comment>
<comment type="catalytic activity">
    <reaction evidence="1">
        <text>choline + A = betaine aldehyde + AH2</text>
        <dbReference type="Rhea" id="RHEA:17433"/>
        <dbReference type="ChEBI" id="CHEBI:13193"/>
        <dbReference type="ChEBI" id="CHEBI:15354"/>
        <dbReference type="ChEBI" id="CHEBI:15710"/>
        <dbReference type="ChEBI" id="CHEBI:17499"/>
        <dbReference type="EC" id="1.1.99.1"/>
    </reaction>
</comment>
<comment type="catalytic activity">
    <reaction evidence="1">
        <text>betaine aldehyde + NAD(+) + H2O = glycine betaine + NADH + 2 H(+)</text>
        <dbReference type="Rhea" id="RHEA:15305"/>
        <dbReference type="ChEBI" id="CHEBI:15377"/>
        <dbReference type="ChEBI" id="CHEBI:15378"/>
        <dbReference type="ChEBI" id="CHEBI:15710"/>
        <dbReference type="ChEBI" id="CHEBI:17750"/>
        <dbReference type="ChEBI" id="CHEBI:57540"/>
        <dbReference type="ChEBI" id="CHEBI:57945"/>
        <dbReference type="EC" id="1.2.1.8"/>
    </reaction>
</comment>
<comment type="cofactor">
    <cofactor evidence="1">
        <name>FAD</name>
        <dbReference type="ChEBI" id="CHEBI:57692"/>
    </cofactor>
</comment>
<comment type="pathway">
    <text evidence="1">Amine and polyamine biosynthesis; betaine biosynthesis via choline pathway; betaine aldehyde from choline (cytochrome c reductase route): step 1/1.</text>
</comment>
<comment type="similarity">
    <text evidence="1">Belongs to the GMC oxidoreductase family.</text>
</comment>
<protein>
    <recommendedName>
        <fullName evidence="1">Oxygen-dependent choline dehydrogenase</fullName>
        <shortName evidence="1">CDH</shortName>
        <shortName evidence="1">CHD</shortName>
        <ecNumber evidence="1">1.1.99.1</ecNumber>
    </recommendedName>
    <alternativeName>
        <fullName evidence="1">Betaine aldehyde dehydrogenase</fullName>
        <shortName evidence="1">BADH</shortName>
        <ecNumber evidence="1">1.2.1.8</ecNumber>
    </alternativeName>
</protein>
<proteinExistence type="inferred from homology"/>
<keyword id="KW-0274">FAD</keyword>
<keyword id="KW-0285">Flavoprotein</keyword>
<keyword id="KW-0520">NAD</keyword>
<keyword id="KW-0560">Oxidoreductase</keyword>
<feature type="chain" id="PRO_1000046564" description="Oxygen-dependent choline dehydrogenase">
    <location>
        <begin position="1"/>
        <end position="554"/>
    </location>
</feature>
<feature type="active site" description="Proton acceptor" evidence="1">
    <location>
        <position position="473"/>
    </location>
</feature>
<feature type="binding site" evidence="1">
    <location>
        <begin position="4"/>
        <end position="33"/>
    </location>
    <ligand>
        <name>FAD</name>
        <dbReference type="ChEBI" id="CHEBI:57692"/>
    </ligand>
</feature>
<name>BETA_KLEP7</name>
<sequence>MQFDYIIIGAGSAGNVLATRLTEDPNTTVLLLEAGGPDYRFDFRTQMPAALAYPLQGKRYNWAYETEPEPYMNNRRMECGRGKGLGGSSLINGMCYIRGNAMDLDNWAKEPGLEHWSYLDCLPYYRKAETRDIGPNDYHGGDGPVSVTTPKPGNNPLFEAMVEAGVQAGYPRTDDLNGYQQEGFGPMDRTVTPQGRRASTARGYLDQARGRPNLTIRTHALTDHIIFAGKRAVGVEWLEGESTIPSKATANKEVLLCAGAIASPQILQRSGVGNPELLRQFDIPVVHDLPGVGENLQDHLEMYLQYECKEPVSLYPALQWWNQPKIGAEWLFGGTGIGASNQFEAGGFIRSRAEFAWPNIQYHFLPVAINYNGSNAVKEHGFQCHVGSMRSPSRGHVRLKSRDPHAHPAILFNYMSHEQDWQEFRDAIRITREIMNQPALDKYRGREISPGIECQSDAELDEFVRNHAETAFHPCGTCKMGYDEMAVVDGEGRVHGLEGLRVVDASIMPQIITGNLNATTIMIGEKMADAIRGRQPLPRSTATYYVAGDAPVRR</sequence>
<reference key="1">
    <citation type="submission" date="2006-09" db="EMBL/GenBank/DDBJ databases">
        <authorList>
            <consortium name="The Klebsiella pneumonia Genome Sequencing Project"/>
            <person name="McClelland M."/>
            <person name="Sanderson E.K."/>
            <person name="Spieth J."/>
            <person name="Clifton W.S."/>
            <person name="Latreille P."/>
            <person name="Sabo A."/>
            <person name="Pepin K."/>
            <person name="Bhonagiri V."/>
            <person name="Porwollik S."/>
            <person name="Ali J."/>
            <person name="Wilson R.K."/>
        </authorList>
    </citation>
    <scope>NUCLEOTIDE SEQUENCE [LARGE SCALE GENOMIC DNA]</scope>
    <source>
        <strain>ATCC 700721 / MGH 78578</strain>
    </source>
</reference>
<organism>
    <name type="scientific">Klebsiella pneumoniae subsp. pneumoniae (strain ATCC 700721 / MGH 78578)</name>
    <dbReference type="NCBI Taxonomy" id="272620"/>
    <lineage>
        <taxon>Bacteria</taxon>
        <taxon>Pseudomonadati</taxon>
        <taxon>Pseudomonadota</taxon>
        <taxon>Gammaproteobacteria</taxon>
        <taxon>Enterobacterales</taxon>
        <taxon>Enterobacteriaceae</taxon>
        <taxon>Klebsiella/Raoultella group</taxon>
        <taxon>Klebsiella</taxon>
        <taxon>Klebsiella pneumoniae complex</taxon>
    </lineage>
</organism>
<accession>A6T613</accession>
<evidence type="ECO:0000255" key="1">
    <source>
        <dbReference type="HAMAP-Rule" id="MF_00750"/>
    </source>
</evidence>